<evidence type="ECO:0000255" key="1"/>
<evidence type="ECO:0000255" key="2">
    <source>
        <dbReference type="PROSITE-ProRule" id="PRU00169"/>
    </source>
</evidence>
<evidence type="ECO:0000269" key="3">
    <source>
    </source>
</evidence>
<evidence type="ECO:0000303" key="4">
    <source>
    </source>
</evidence>
<evidence type="ECO:0000305" key="5">
    <source>
    </source>
</evidence>
<evidence type="ECO:0000312" key="6">
    <source>
        <dbReference type="EMBL" id="ADE03360.1"/>
    </source>
</evidence>
<evidence type="ECO:0000312" key="7">
    <source>
        <dbReference type="EMBL" id="ELY27957.1"/>
    </source>
</evidence>
<evidence type="ECO:0000312" key="8">
    <source>
        <dbReference type="Proteomes" id="UP000008243"/>
    </source>
</evidence>
<evidence type="ECO:0000312" key="9">
    <source>
        <dbReference type="Proteomes" id="UP000011532"/>
    </source>
</evidence>
<proteinExistence type="inferred from homology"/>
<comment type="function">
    <text evidence="5">May be part of a signal-dependent gene regulation cascade that is relevant to swimming motility. May be involved in the transcription regulation of target genes.</text>
</comment>
<comment type="disruption phenotype">
    <text evidence="3">Cells having transposon insertions in this gene are hypermotile.</text>
</comment>
<sequence length="582" mass="62767">MVTERSARESPEQRAAEQVVLVVDDDEDLADTCRYWLDGERFAVETAYGGEEALHRLDDTVDVVLLDRRMPNVTGDDVLEEIRERGLDCRVAMMTAVEPDTDIVEMPFDAYLVKPVSESEVKETVEELLVRSGFESGVREYFALESTEAALDSRDVEELREPEALSDLRSRLEAVRAEHEAAIRNREAQLDRLNRTNELLRDVDRALIDARTRDEIEQTVCDVVADAHEAAVVLRRTAAGTLRCTAAAGHGLDPAGVDLDFVDEAFGVDGAAEDGFVFEDIPGAHRAAVLGDDADDLDAVSALCVSIDYRETMYGALVVYDETDGFDDESAGLFSDLGATVGNGINATQSKRLLNGDSVVELEFQVGRDAGVLARLSAALDCQLSLDGVTRLDDGLACFISVAGASGCDAVAAAIDAVDVSQARVVADGDEESVVELRTDAEAVLSTAIDHGASVERLTLSEGSGTLTLHVAADADHGALVEAVTTAAAGVSVVAKREVERSVQSADSFRRALDSKLTDRQRTVLETSLVSGYFEWPRGSTAEEVADSLGISPPTLHEHLRTAERKLIETYFDELNQAPADD</sequence>
<accession>D4GXP4</accession>
<accession>A0A384KM42</accession>
<accession>L9UTB8</accession>
<reference evidence="6 8" key="1">
    <citation type="journal article" date="2010" name="PLoS ONE">
        <title>The complete genome sequence of Haloferax volcanii DS2, a model archaeon.</title>
        <authorList>
            <person name="Hartman A.L."/>
            <person name="Norais C."/>
            <person name="Badger J.H."/>
            <person name="Delmas S."/>
            <person name="Haldenby S."/>
            <person name="Madupu R."/>
            <person name="Robinson J."/>
            <person name="Khouri H."/>
            <person name="Ren Q."/>
            <person name="Lowe T.M."/>
            <person name="Maupin-Furlow J."/>
            <person name="Pohlschroder M."/>
            <person name="Daniels C."/>
            <person name="Pfeiffer F."/>
            <person name="Allers T."/>
            <person name="Eisen J.A."/>
        </authorList>
    </citation>
    <scope>NUCLEOTIDE SEQUENCE [LARGE SCALE GENOMIC DNA]</scope>
    <source>
        <strain evidence="8">ATCC 29605 / DSM 3757 / JCM 8879 / NBRC 14742 / NCIMB 2012 / VKM B-1768 / DS2</strain>
    </source>
</reference>
<reference evidence="7 9" key="2">
    <citation type="journal article" date="2014" name="PLoS Genet.">
        <title>Phylogenetically driven sequencing of extremely halophilic archaea reveals strategies for static and dynamic osmo-response.</title>
        <authorList>
            <person name="Becker E.A."/>
            <person name="Seitzer P.M."/>
            <person name="Tritt A."/>
            <person name="Larsen D."/>
            <person name="Krusor M."/>
            <person name="Yao A.I."/>
            <person name="Wu D."/>
            <person name="Madern D."/>
            <person name="Eisen J.A."/>
            <person name="Darling A.E."/>
            <person name="Facciotti M.T."/>
        </authorList>
    </citation>
    <scope>NUCLEOTIDE SEQUENCE [LARGE SCALE GENOMIC DNA]</scope>
    <source>
        <strain evidence="9">ATCC 29605 / DSM 3757 / JCM 8879 / NBRC 14742 / NCIMB 2012 / VKM B-1768 / DS2</strain>
    </source>
</reference>
<reference key="3">
    <citation type="journal article" date="2020" name="Genes (Basel)">
        <title>Mutations Affecting HVO_1357 or HVO_2248 Cause Hypermotility in Haloferax volcanii, Suggesting Roles in Motility Regulation.</title>
        <authorList>
            <person name="Collins M."/>
            <person name="Afolayan S."/>
            <person name="Igiraneza A.B."/>
            <person name="Schiller H."/>
            <person name="Krespan E."/>
            <person name="Beiting D.P."/>
            <person name="Dyall-Smith M."/>
            <person name="Pfeiffer F."/>
            <person name="Pohlschroder M."/>
        </authorList>
    </citation>
    <scope>FUNCTION</scope>
    <scope>DISRUPTION PHENOTYPE</scope>
    <source>
        <strain evidence="4">DS2 / DS70</strain>
    </source>
</reference>
<name>Y1357_HALVD</name>
<organism evidence="6">
    <name type="scientific">Haloferax volcanii (strain ATCC 29605 / DSM 3757 / JCM 8879 / NBRC 14742 / NCIMB 2012 / VKM B-1768 / DS2)</name>
    <name type="common">Halobacterium volcanii</name>
    <dbReference type="NCBI Taxonomy" id="309800"/>
    <lineage>
        <taxon>Archaea</taxon>
        <taxon>Methanobacteriati</taxon>
        <taxon>Methanobacteriota</taxon>
        <taxon>Stenosarchaea group</taxon>
        <taxon>Halobacteria</taxon>
        <taxon>Halobacteriales</taxon>
        <taxon>Haloferacaceae</taxon>
        <taxon>Haloferax</taxon>
    </lineage>
</organism>
<feature type="chain" id="PRO_0000454835" description="Putative transcriptional regulator HVO_1357">
    <location>
        <begin position="1"/>
        <end position="582"/>
    </location>
</feature>
<feature type="domain" description="Response regulatory" evidence="2">
    <location>
        <begin position="19"/>
        <end position="129"/>
    </location>
</feature>
<feature type="domain" description="HTH bat-type" evidence="1">
    <location>
        <begin position="517"/>
        <end position="569"/>
    </location>
</feature>
<feature type="coiled-coil region" evidence="1">
    <location>
        <begin position="165"/>
        <end position="203"/>
    </location>
</feature>
<feature type="modified residue" description="4-aspartylphosphate" evidence="2">
    <location>
        <position position="67"/>
    </location>
</feature>
<gene>
    <name evidence="6" type="ordered locus">HVO_1357</name>
    <name evidence="7" type="ORF">C498_11958</name>
</gene>
<protein>
    <recommendedName>
        <fullName evidence="4">Putative transcriptional regulator HVO_1357</fullName>
    </recommendedName>
    <alternativeName>
        <fullName evidence="7">Bacterioopsin activator-like protein</fullName>
    </alternativeName>
    <alternativeName>
        <fullName evidence="6">Receiver/bat box HTH-10 family transcription regulator</fullName>
    </alternativeName>
</protein>
<keyword id="KW-0175">Coiled coil</keyword>
<keyword id="KW-0238">DNA-binding</keyword>
<keyword id="KW-0597">Phosphoprotein</keyword>
<keyword id="KW-1185">Reference proteome</keyword>
<keyword id="KW-0804">Transcription</keyword>
<keyword id="KW-0805">Transcription regulation</keyword>
<keyword id="KW-0902">Two-component regulatory system</keyword>
<dbReference type="EMBL" id="CP001956">
    <property type="protein sequence ID" value="ADE03360.1"/>
    <property type="molecule type" value="Genomic_DNA"/>
</dbReference>
<dbReference type="EMBL" id="AOHU01000091">
    <property type="protein sequence ID" value="ELY27957.1"/>
    <property type="molecule type" value="Genomic_DNA"/>
</dbReference>
<dbReference type="RefSeq" id="WP_004043582.1">
    <property type="nucleotide sequence ID" value="NC_013967.1"/>
</dbReference>
<dbReference type="SMR" id="D4GXP4"/>
<dbReference type="STRING" id="309800.HVO_1357"/>
<dbReference type="PaxDb" id="309800-C498_11958"/>
<dbReference type="EnsemblBacteria" id="ADE03360">
    <property type="protein sequence ID" value="ADE03360"/>
    <property type="gene ID" value="HVO_1357"/>
</dbReference>
<dbReference type="GeneID" id="8926762"/>
<dbReference type="KEGG" id="hvo:HVO_1357"/>
<dbReference type="PATRIC" id="fig|309800.29.peg.2282"/>
<dbReference type="eggNOG" id="arCOG02276">
    <property type="taxonomic scope" value="Archaea"/>
</dbReference>
<dbReference type="eggNOG" id="arCOG02601">
    <property type="taxonomic scope" value="Archaea"/>
</dbReference>
<dbReference type="HOGENOM" id="CLU_010057_2_0_2"/>
<dbReference type="OrthoDB" id="165911at2157"/>
<dbReference type="Proteomes" id="UP000008243">
    <property type="component" value="Chromosome"/>
</dbReference>
<dbReference type="Proteomes" id="UP000011532">
    <property type="component" value="Unassembled WGS sequence"/>
</dbReference>
<dbReference type="GO" id="GO:0003677">
    <property type="term" value="F:DNA binding"/>
    <property type="evidence" value="ECO:0007669"/>
    <property type="project" value="UniProtKB-KW"/>
</dbReference>
<dbReference type="GO" id="GO:0000160">
    <property type="term" value="P:phosphorelay signal transduction system"/>
    <property type="evidence" value="ECO:0007669"/>
    <property type="project" value="UniProtKB-KW"/>
</dbReference>
<dbReference type="GO" id="GO:2000145">
    <property type="term" value="P:regulation of cell motility"/>
    <property type="evidence" value="ECO:0000315"/>
    <property type="project" value="UniProtKB"/>
</dbReference>
<dbReference type="GO" id="GO:0006355">
    <property type="term" value="P:regulation of DNA-templated transcription"/>
    <property type="evidence" value="ECO:0000303"/>
    <property type="project" value="UniProtKB"/>
</dbReference>
<dbReference type="CDD" id="cd00156">
    <property type="entry name" value="REC"/>
    <property type="match status" value="1"/>
</dbReference>
<dbReference type="Gene3D" id="3.30.450.40">
    <property type="match status" value="1"/>
</dbReference>
<dbReference type="Gene3D" id="3.40.50.2300">
    <property type="match status" value="1"/>
</dbReference>
<dbReference type="Gene3D" id="1.10.10.10">
    <property type="entry name" value="Winged helix-like DNA-binding domain superfamily/Winged helix DNA-binding domain"/>
    <property type="match status" value="1"/>
</dbReference>
<dbReference type="InterPro" id="IPR031803">
    <property type="entry name" value="BAT_GAF/HTH-assoc"/>
</dbReference>
<dbReference type="InterPro" id="IPR011006">
    <property type="entry name" value="CheY-like_superfamily"/>
</dbReference>
<dbReference type="InterPro" id="IPR029016">
    <property type="entry name" value="GAF-like_dom_sf"/>
</dbReference>
<dbReference type="InterPro" id="IPR013971">
    <property type="entry name" value="HalX_domain"/>
</dbReference>
<dbReference type="InterPro" id="IPR007050">
    <property type="entry name" value="HTH_bacterioopsin"/>
</dbReference>
<dbReference type="InterPro" id="IPR013324">
    <property type="entry name" value="RNA_pol_sigma_r3/r4-like"/>
</dbReference>
<dbReference type="InterPro" id="IPR001789">
    <property type="entry name" value="Sig_transdc_resp-reg_receiver"/>
</dbReference>
<dbReference type="InterPro" id="IPR036388">
    <property type="entry name" value="WH-like_DNA-bd_sf"/>
</dbReference>
<dbReference type="PANTHER" id="PTHR34236">
    <property type="entry name" value="DIMETHYL SULFOXIDE REDUCTASE TRANSCRIPTIONAL ACTIVATOR"/>
    <property type="match status" value="1"/>
</dbReference>
<dbReference type="PANTHER" id="PTHR34236:SF1">
    <property type="entry name" value="DIMETHYL SULFOXIDE REDUCTASE TRANSCRIPTIONAL ACTIVATOR"/>
    <property type="match status" value="1"/>
</dbReference>
<dbReference type="Pfam" id="PF15915">
    <property type="entry name" value="BAT"/>
    <property type="match status" value="1"/>
</dbReference>
<dbReference type="Pfam" id="PF08663">
    <property type="entry name" value="HalX"/>
    <property type="match status" value="1"/>
</dbReference>
<dbReference type="Pfam" id="PF04967">
    <property type="entry name" value="HTH_10"/>
    <property type="match status" value="1"/>
</dbReference>
<dbReference type="Pfam" id="PF00072">
    <property type="entry name" value="Response_reg"/>
    <property type="match status" value="1"/>
</dbReference>
<dbReference type="SMART" id="SM00448">
    <property type="entry name" value="REC"/>
    <property type="match status" value="1"/>
</dbReference>
<dbReference type="SUPFAM" id="SSF52172">
    <property type="entry name" value="CheY-like"/>
    <property type="match status" value="1"/>
</dbReference>
<dbReference type="SUPFAM" id="SSF55781">
    <property type="entry name" value="GAF domain-like"/>
    <property type="match status" value="1"/>
</dbReference>
<dbReference type="SUPFAM" id="SSF88659">
    <property type="entry name" value="Sigma3 and sigma4 domains of RNA polymerase sigma factors"/>
    <property type="match status" value="1"/>
</dbReference>
<dbReference type="PROSITE" id="PS50110">
    <property type="entry name" value="RESPONSE_REGULATORY"/>
    <property type="match status" value="1"/>
</dbReference>